<name>CH604_RHILO</name>
<protein>
    <recommendedName>
        <fullName evidence="1">Chaperonin GroEL 4</fullName>
        <ecNumber evidence="1">5.6.1.7</ecNumber>
    </recommendedName>
    <alternativeName>
        <fullName evidence="1">60 kDa chaperonin 4</fullName>
    </alternativeName>
    <alternativeName>
        <fullName evidence="1">Chaperonin-60 4</fullName>
        <shortName evidence="1">Cpn60 4</shortName>
    </alternativeName>
</protein>
<comment type="function">
    <text evidence="1">Together with its co-chaperonin GroES, plays an essential role in assisting protein folding. The GroEL-GroES system forms a nano-cage that allows encapsulation of the non-native substrate proteins and provides a physical environment optimized to promote and accelerate protein folding.</text>
</comment>
<comment type="catalytic activity">
    <reaction evidence="1">
        <text>ATP + H2O + a folded polypeptide = ADP + phosphate + an unfolded polypeptide.</text>
        <dbReference type="EC" id="5.6.1.7"/>
    </reaction>
</comment>
<comment type="subunit">
    <text evidence="1">Forms a cylinder of 14 subunits composed of two heptameric rings stacked back-to-back. Interacts with the co-chaperonin GroES.</text>
</comment>
<comment type="subcellular location">
    <subcellularLocation>
        <location evidence="1">Cytoplasm</location>
    </subcellularLocation>
</comment>
<comment type="similarity">
    <text evidence="1">Belongs to the chaperonin (HSP60) family.</text>
</comment>
<feature type="chain" id="PRO_0000063497" description="Chaperonin GroEL 4">
    <location>
        <begin position="1"/>
        <end position="551"/>
    </location>
</feature>
<feature type="binding site" evidence="1">
    <location>
        <begin position="30"/>
        <end position="33"/>
    </location>
    <ligand>
        <name>ATP</name>
        <dbReference type="ChEBI" id="CHEBI:30616"/>
    </ligand>
</feature>
<feature type="binding site" evidence="1">
    <location>
        <position position="51"/>
    </location>
    <ligand>
        <name>ATP</name>
        <dbReference type="ChEBI" id="CHEBI:30616"/>
    </ligand>
</feature>
<feature type="binding site" evidence="1">
    <location>
        <begin position="87"/>
        <end position="91"/>
    </location>
    <ligand>
        <name>ATP</name>
        <dbReference type="ChEBI" id="CHEBI:30616"/>
    </ligand>
</feature>
<feature type="binding site" evidence="1">
    <location>
        <position position="415"/>
    </location>
    <ligand>
        <name>ATP</name>
        <dbReference type="ChEBI" id="CHEBI:30616"/>
    </ligand>
</feature>
<feature type="binding site" evidence="1">
    <location>
        <position position="495"/>
    </location>
    <ligand>
        <name>ATP</name>
        <dbReference type="ChEBI" id="CHEBI:30616"/>
    </ligand>
</feature>
<accession>Q983S4</accession>
<organism>
    <name type="scientific">Mesorhizobium japonicum (strain LMG 29417 / CECT 9101 / MAFF 303099)</name>
    <name type="common">Mesorhizobium loti (strain MAFF 303099)</name>
    <dbReference type="NCBI Taxonomy" id="266835"/>
    <lineage>
        <taxon>Bacteria</taxon>
        <taxon>Pseudomonadati</taxon>
        <taxon>Pseudomonadota</taxon>
        <taxon>Alphaproteobacteria</taxon>
        <taxon>Hyphomicrobiales</taxon>
        <taxon>Phyllobacteriaceae</taxon>
        <taxon>Mesorhizobium</taxon>
    </lineage>
</organism>
<evidence type="ECO:0000255" key="1">
    <source>
        <dbReference type="HAMAP-Rule" id="MF_00600"/>
    </source>
</evidence>
<dbReference type="EC" id="5.6.1.7" evidence="1"/>
<dbReference type="EMBL" id="BA000012">
    <property type="protein sequence ID" value="BAB53806.1"/>
    <property type="molecule type" value="Genomic_DNA"/>
</dbReference>
<dbReference type="SMR" id="Q983S4"/>
<dbReference type="KEGG" id="mlo:mll8201"/>
<dbReference type="eggNOG" id="COG0459">
    <property type="taxonomic scope" value="Bacteria"/>
</dbReference>
<dbReference type="HOGENOM" id="CLU_016503_3_0_5"/>
<dbReference type="Proteomes" id="UP000000552">
    <property type="component" value="Chromosome"/>
</dbReference>
<dbReference type="GO" id="GO:0005737">
    <property type="term" value="C:cytoplasm"/>
    <property type="evidence" value="ECO:0007669"/>
    <property type="project" value="UniProtKB-SubCell"/>
</dbReference>
<dbReference type="GO" id="GO:0005524">
    <property type="term" value="F:ATP binding"/>
    <property type="evidence" value="ECO:0007669"/>
    <property type="project" value="UniProtKB-UniRule"/>
</dbReference>
<dbReference type="GO" id="GO:0140662">
    <property type="term" value="F:ATP-dependent protein folding chaperone"/>
    <property type="evidence" value="ECO:0007669"/>
    <property type="project" value="InterPro"/>
</dbReference>
<dbReference type="GO" id="GO:0016853">
    <property type="term" value="F:isomerase activity"/>
    <property type="evidence" value="ECO:0007669"/>
    <property type="project" value="UniProtKB-KW"/>
</dbReference>
<dbReference type="GO" id="GO:0051082">
    <property type="term" value="F:unfolded protein binding"/>
    <property type="evidence" value="ECO:0007669"/>
    <property type="project" value="UniProtKB-UniRule"/>
</dbReference>
<dbReference type="GO" id="GO:0042026">
    <property type="term" value="P:protein refolding"/>
    <property type="evidence" value="ECO:0007669"/>
    <property type="project" value="UniProtKB-UniRule"/>
</dbReference>
<dbReference type="CDD" id="cd03344">
    <property type="entry name" value="GroEL"/>
    <property type="match status" value="1"/>
</dbReference>
<dbReference type="FunFam" id="1.10.560.10:FF:000001">
    <property type="entry name" value="60 kDa chaperonin"/>
    <property type="match status" value="1"/>
</dbReference>
<dbReference type="FunFam" id="3.50.7.10:FF:000001">
    <property type="entry name" value="60 kDa chaperonin"/>
    <property type="match status" value="1"/>
</dbReference>
<dbReference type="Gene3D" id="3.50.7.10">
    <property type="entry name" value="GroEL"/>
    <property type="match status" value="1"/>
</dbReference>
<dbReference type="Gene3D" id="1.10.560.10">
    <property type="entry name" value="GroEL-like equatorial domain"/>
    <property type="match status" value="1"/>
</dbReference>
<dbReference type="Gene3D" id="3.30.260.10">
    <property type="entry name" value="TCP-1-like chaperonin intermediate domain"/>
    <property type="match status" value="1"/>
</dbReference>
<dbReference type="HAMAP" id="MF_00600">
    <property type="entry name" value="CH60"/>
    <property type="match status" value="1"/>
</dbReference>
<dbReference type="InterPro" id="IPR018370">
    <property type="entry name" value="Chaperonin_Cpn60_CS"/>
</dbReference>
<dbReference type="InterPro" id="IPR001844">
    <property type="entry name" value="Cpn60/GroEL"/>
</dbReference>
<dbReference type="InterPro" id="IPR002423">
    <property type="entry name" value="Cpn60/GroEL/TCP-1"/>
</dbReference>
<dbReference type="InterPro" id="IPR027409">
    <property type="entry name" value="GroEL-like_apical_dom_sf"/>
</dbReference>
<dbReference type="InterPro" id="IPR027413">
    <property type="entry name" value="GROEL-like_equatorial_sf"/>
</dbReference>
<dbReference type="InterPro" id="IPR027410">
    <property type="entry name" value="TCP-1-like_intermed_sf"/>
</dbReference>
<dbReference type="NCBIfam" id="TIGR02348">
    <property type="entry name" value="GroEL"/>
    <property type="match status" value="1"/>
</dbReference>
<dbReference type="NCBIfam" id="NF000592">
    <property type="entry name" value="PRK00013.1"/>
    <property type="match status" value="1"/>
</dbReference>
<dbReference type="NCBIfam" id="NF009487">
    <property type="entry name" value="PRK12849.1"/>
    <property type="match status" value="1"/>
</dbReference>
<dbReference type="NCBIfam" id="NF009488">
    <property type="entry name" value="PRK12850.1"/>
    <property type="match status" value="1"/>
</dbReference>
<dbReference type="NCBIfam" id="NF009489">
    <property type="entry name" value="PRK12851.1"/>
    <property type="match status" value="1"/>
</dbReference>
<dbReference type="PANTHER" id="PTHR45633">
    <property type="entry name" value="60 KDA HEAT SHOCK PROTEIN, MITOCHONDRIAL"/>
    <property type="match status" value="1"/>
</dbReference>
<dbReference type="Pfam" id="PF00118">
    <property type="entry name" value="Cpn60_TCP1"/>
    <property type="match status" value="1"/>
</dbReference>
<dbReference type="PRINTS" id="PR00298">
    <property type="entry name" value="CHAPERONIN60"/>
</dbReference>
<dbReference type="SUPFAM" id="SSF52029">
    <property type="entry name" value="GroEL apical domain-like"/>
    <property type="match status" value="1"/>
</dbReference>
<dbReference type="SUPFAM" id="SSF48592">
    <property type="entry name" value="GroEL equatorial domain-like"/>
    <property type="match status" value="1"/>
</dbReference>
<dbReference type="SUPFAM" id="SSF54849">
    <property type="entry name" value="GroEL-intermediate domain like"/>
    <property type="match status" value="1"/>
</dbReference>
<dbReference type="PROSITE" id="PS00296">
    <property type="entry name" value="CHAPERONINS_CPN60"/>
    <property type="match status" value="1"/>
</dbReference>
<sequence length="551" mass="57420">MAAKDVKFSRDARERMLRGVNILADAVKVTLGPKGRNVVIDKSFGAPRITKDGVTVAKEIELEDKFENMGAQMVREVASKTNDIAGDGTTTATVLAQSIVQEGHKAVAAGMNPMDLKRGIDLAVSEVVAALGKAAKKIKTSEEVAQVGTISANGDESVGKMIAEAMQKVGNEGVITVEEAKTAETELEVVEGMQFDRGYLSPYFVTNADKMVADLEDAYILLHEKKLSNLQAMLPVLEAVVQTSKPLLIISEDVEGEALATLVVNKLRGGLKIAAVKAPGFGDRRKAMLEDIAILTGGQVISEDLGIKLENVGLNMLGRAKKVSISKENTTIVDGAGKKAEIQGRVAQIKQQIEETTSDYDKEKLQERLAKLAGGVAVIRVGGATEVEVKEKKDRVDDALNATRAAVEEGIVAGGGVALLRASANIKAAGANADQAAGINIVRRALQAPARQIASNAGAEASIVAGKILENKGATFGYNAQTGEYGDMIAMGIVDPVKVVRTALQDAASVAGLLVTTEAMIAEAPKKESAGGGMPGGMGGGGMGGMGGMDF</sequence>
<proteinExistence type="inferred from homology"/>
<reference key="1">
    <citation type="journal article" date="2000" name="DNA Res.">
        <title>Complete genome structure of the nitrogen-fixing symbiotic bacterium Mesorhizobium loti.</title>
        <authorList>
            <person name="Kaneko T."/>
            <person name="Nakamura Y."/>
            <person name="Sato S."/>
            <person name="Asamizu E."/>
            <person name="Kato T."/>
            <person name="Sasamoto S."/>
            <person name="Watanabe A."/>
            <person name="Idesawa K."/>
            <person name="Ishikawa A."/>
            <person name="Kawashima K."/>
            <person name="Kimura T."/>
            <person name="Kishida Y."/>
            <person name="Kiyokawa C."/>
            <person name="Kohara M."/>
            <person name="Matsumoto M."/>
            <person name="Matsuno A."/>
            <person name="Mochizuki Y."/>
            <person name="Nakayama S."/>
            <person name="Nakazaki N."/>
            <person name="Shimpo S."/>
            <person name="Sugimoto M."/>
            <person name="Takeuchi C."/>
            <person name="Yamada M."/>
            <person name="Tabata S."/>
        </authorList>
    </citation>
    <scope>NUCLEOTIDE SEQUENCE [LARGE SCALE GENOMIC DNA]</scope>
    <source>
        <strain>LMG 29417 / CECT 9101 / MAFF 303099</strain>
    </source>
</reference>
<gene>
    <name evidence="1" type="primary">groEL4</name>
    <name evidence="1" type="synonym">groL4</name>
    <name type="ordered locus">mll8201</name>
</gene>
<keyword id="KW-0067">ATP-binding</keyword>
<keyword id="KW-0143">Chaperone</keyword>
<keyword id="KW-0963">Cytoplasm</keyword>
<keyword id="KW-0413">Isomerase</keyword>
<keyword id="KW-0547">Nucleotide-binding</keyword>